<protein>
    <recommendedName>
        <fullName evidence="1">Large ribosomal subunit protein bL9</fullName>
    </recommendedName>
    <alternativeName>
        <fullName evidence="2">50S ribosomal protein L9</fullName>
    </alternativeName>
</protein>
<organism>
    <name type="scientific">Bartonella bacilliformis (strain ATCC 35685 / KC583 / Herrer 020/F12,63)</name>
    <dbReference type="NCBI Taxonomy" id="360095"/>
    <lineage>
        <taxon>Bacteria</taxon>
        <taxon>Pseudomonadati</taxon>
        <taxon>Pseudomonadota</taxon>
        <taxon>Alphaproteobacteria</taxon>
        <taxon>Hyphomicrobiales</taxon>
        <taxon>Bartonellaceae</taxon>
        <taxon>Bartonella</taxon>
    </lineage>
</organism>
<evidence type="ECO:0000255" key="1">
    <source>
        <dbReference type="HAMAP-Rule" id="MF_00503"/>
    </source>
</evidence>
<evidence type="ECO:0000305" key="2"/>
<proteinExistence type="inferred from homology"/>
<comment type="function">
    <text evidence="1">Binds to the 23S rRNA.</text>
</comment>
<comment type="similarity">
    <text evidence="1">Belongs to the bacterial ribosomal protein bL9 family.</text>
</comment>
<reference key="1">
    <citation type="submission" date="2006-12" db="EMBL/GenBank/DDBJ databases">
        <authorList>
            <person name="Hendrix L."/>
            <person name="Mohamoud Y."/>
            <person name="Radune D."/>
            <person name="Shvartsbeyn A."/>
            <person name="Daugherty S."/>
            <person name="Dodson R."/>
            <person name="Durkin A.S."/>
            <person name="Harkins D."/>
            <person name="Huot H."/>
            <person name="Kothari S.P."/>
            <person name="Madupu R."/>
            <person name="Li J."/>
            <person name="Nelson W.C."/>
            <person name="Shrivastava S."/>
            <person name="Giglio M.G."/>
            <person name="Haft D."/>
            <person name="Selengut J."/>
            <person name="Fraser-Ligget C."/>
            <person name="Seshadri R."/>
        </authorList>
    </citation>
    <scope>NUCLEOTIDE SEQUENCE [LARGE SCALE GENOMIC DNA]</scope>
    <source>
        <strain>ATCC 35685 / KC583 / Herrer 020/F12,63</strain>
    </source>
</reference>
<name>RL9_BARBK</name>
<gene>
    <name evidence="1" type="primary">rplI</name>
    <name type="ordered locus">BARBAKC583_0491</name>
</gene>
<feature type="chain" id="PRO_1000014742" description="Large ribosomal subunit protein bL9">
    <location>
        <begin position="1"/>
        <end position="179"/>
    </location>
</feature>
<dbReference type="EMBL" id="CP000524">
    <property type="protein sequence ID" value="ABM44435.1"/>
    <property type="molecule type" value="Genomic_DNA"/>
</dbReference>
<dbReference type="RefSeq" id="WP_005766580.1">
    <property type="nucleotide sequence ID" value="NC_008783.1"/>
</dbReference>
<dbReference type="SMR" id="A1US53"/>
<dbReference type="STRING" id="360095.BARBAKC583_0491"/>
<dbReference type="GeneID" id="4684727"/>
<dbReference type="KEGG" id="bbk:BARBAKC583_0491"/>
<dbReference type="PATRIC" id="fig|360095.6.peg.474"/>
<dbReference type="eggNOG" id="COG0359">
    <property type="taxonomic scope" value="Bacteria"/>
</dbReference>
<dbReference type="HOGENOM" id="CLU_078938_3_0_5"/>
<dbReference type="OrthoDB" id="9788336at2"/>
<dbReference type="Proteomes" id="UP000000643">
    <property type="component" value="Chromosome"/>
</dbReference>
<dbReference type="GO" id="GO:1990904">
    <property type="term" value="C:ribonucleoprotein complex"/>
    <property type="evidence" value="ECO:0007669"/>
    <property type="project" value="UniProtKB-KW"/>
</dbReference>
<dbReference type="GO" id="GO:0005840">
    <property type="term" value="C:ribosome"/>
    <property type="evidence" value="ECO:0007669"/>
    <property type="project" value="UniProtKB-KW"/>
</dbReference>
<dbReference type="GO" id="GO:0019843">
    <property type="term" value="F:rRNA binding"/>
    <property type="evidence" value="ECO:0007669"/>
    <property type="project" value="UniProtKB-UniRule"/>
</dbReference>
<dbReference type="GO" id="GO:0003735">
    <property type="term" value="F:structural constituent of ribosome"/>
    <property type="evidence" value="ECO:0007669"/>
    <property type="project" value="InterPro"/>
</dbReference>
<dbReference type="GO" id="GO:0006412">
    <property type="term" value="P:translation"/>
    <property type="evidence" value="ECO:0007669"/>
    <property type="project" value="UniProtKB-UniRule"/>
</dbReference>
<dbReference type="Gene3D" id="3.10.430.100">
    <property type="entry name" value="Ribosomal protein L9, C-terminal domain"/>
    <property type="match status" value="1"/>
</dbReference>
<dbReference type="Gene3D" id="3.40.5.10">
    <property type="entry name" value="Ribosomal protein L9, N-terminal domain"/>
    <property type="match status" value="1"/>
</dbReference>
<dbReference type="HAMAP" id="MF_00503">
    <property type="entry name" value="Ribosomal_bL9"/>
    <property type="match status" value="1"/>
</dbReference>
<dbReference type="InterPro" id="IPR000244">
    <property type="entry name" value="Ribosomal_bL9"/>
</dbReference>
<dbReference type="InterPro" id="IPR009027">
    <property type="entry name" value="Ribosomal_bL9/RNase_H1_N"/>
</dbReference>
<dbReference type="InterPro" id="IPR020594">
    <property type="entry name" value="Ribosomal_bL9_bac/chp"/>
</dbReference>
<dbReference type="InterPro" id="IPR020069">
    <property type="entry name" value="Ribosomal_bL9_C"/>
</dbReference>
<dbReference type="InterPro" id="IPR036791">
    <property type="entry name" value="Ribosomal_bL9_C_sf"/>
</dbReference>
<dbReference type="InterPro" id="IPR020070">
    <property type="entry name" value="Ribosomal_bL9_N"/>
</dbReference>
<dbReference type="InterPro" id="IPR036935">
    <property type="entry name" value="Ribosomal_bL9_N_sf"/>
</dbReference>
<dbReference type="NCBIfam" id="TIGR00158">
    <property type="entry name" value="L9"/>
    <property type="match status" value="1"/>
</dbReference>
<dbReference type="PANTHER" id="PTHR21368">
    <property type="entry name" value="50S RIBOSOMAL PROTEIN L9"/>
    <property type="match status" value="1"/>
</dbReference>
<dbReference type="Pfam" id="PF03948">
    <property type="entry name" value="Ribosomal_L9_C"/>
    <property type="match status" value="1"/>
</dbReference>
<dbReference type="Pfam" id="PF01281">
    <property type="entry name" value="Ribosomal_L9_N"/>
    <property type="match status" value="1"/>
</dbReference>
<dbReference type="SUPFAM" id="SSF55658">
    <property type="entry name" value="L9 N-domain-like"/>
    <property type="match status" value="1"/>
</dbReference>
<dbReference type="SUPFAM" id="SSF55653">
    <property type="entry name" value="Ribosomal protein L9 C-domain"/>
    <property type="match status" value="1"/>
</dbReference>
<dbReference type="PROSITE" id="PS00651">
    <property type="entry name" value="RIBOSOMAL_L9"/>
    <property type="match status" value="1"/>
</dbReference>
<keyword id="KW-0687">Ribonucleoprotein</keyword>
<keyword id="KW-0689">Ribosomal protein</keyword>
<keyword id="KW-0694">RNA-binding</keyword>
<keyword id="KW-0699">rRNA-binding</keyword>
<accession>A1US53</accession>
<sequence>MDIILLERINRLGQIGDIVSVKDGYARNFLLPKGKALRANEANKKFFETQRIKLEARNLECKNEAQKIAERLNGKSFIVVRSAGETGQLYGSVSTRDITDIITMDGFSIERNQIELNHPIKTIGLHPVTLNLHPEVQISVTIHVARSANEAQLQEEAKILTSVEATEIVQEQPLEENIG</sequence>